<reference key="1">
    <citation type="submission" date="2005-08" db="EMBL/GenBank/DDBJ databases">
        <title>Complete sequence of Synechococcus sp. CC9902.</title>
        <authorList>
            <person name="Copeland A."/>
            <person name="Lucas S."/>
            <person name="Lapidus A."/>
            <person name="Barry K."/>
            <person name="Detter J.C."/>
            <person name="Glavina T."/>
            <person name="Hammon N."/>
            <person name="Israni S."/>
            <person name="Pitluck S."/>
            <person name="Martinez M."/>
            <person name="Schmutz J."/>
            <person name="Larimer F."/>
            <person name="Land M."/>
            <person name="Kyrpides N."/>
            <person name="Ivanova N."/>
            <person name="Richardson P."/>
        </authorList>
    </citation>
    <scope>NUCLEOTIDE SEQUENCE [LARGE SCALE GENOMIC DNA]</scope>
    <source>
        <strain>CC9902</strain>
    </source>
</reference>
<feature type="chain" id="PRO_0000242307" description="Phosphomethylpyrimidine synthase">
    <location>
        <begin position="1"/>
        <end position="466"/>
    </location>
</feature>
<feature type="binding site" evidence="1">
    <location>
        <position position="80"/>
    </location>
    <ligand>
        <name>substrate</name>
    </ligand>
</feature>
<feature type="binding site" evidence="1">
    <location>
        <position position="109"/>
    </location>
    <ligand>
        <name>substrate</name>
    </ligand>
</feature>
<feature type="binding site" evidence="1">
    <location>
        <position position="139"/>
    </location>
    <ligand>
        <name>substrate</name>
    </ligand>
</feature>
<feature type="binding site" evidence="1">
    <location>
        <position position="175"/>
    </location>
    <ligand>
        <name>substrate</name>
    </ligand>
</feature>
<feature type="binding site" evidence="1">
    <location>
        <begin position="195"/>
        <end position="197"/>
    </location>
    <ligand>
        <name>substrate</name>
    </ligand>
</feature>
<feature type="binding site" evidence="1">
    <location>
        <begin position="236"/>
        <end position="239"/>
    </location>
    <ligand>
        <name>substrate</name>
    </ligand>
</feature>
<feature type="binding site" evidence="1">
    <location>
        <position position="275"/>
    </location>
    <ligand>
        <name>substrate</name>
    </ligand>
</feature>
<feature type="binding site" evidence="1">
    <location>
        <position position="279"/>
    </location>
    <ligand>
        <name>Zn(2+)</name>
        <dbReference type="ChEBI" id="CHEBI:29105"/>
    </ligand>
</feature>
<feature type="binding site" evidence="1">
    <location>
        <position position="302"/>
    </location>
    <ligand>
        <name>substrate</name>
    </ligand>
</feature>
<feature type="binding site" evidence="1">
    <location>
        <position position="343"/>
    </location>
    <ligand>
        <name>Zn(2+)</name>
        <dbReference type="ChEBI" id="CHEBI:29105"/>
    </ligand>
</feature>
<feature type="binding site" evidence="1">
    <location>
        <position position="423"/>
    </location>
    <ligand>
        <name>[4Fe-4S] cluster</name>
        <dbReference type="ChEBI" id="CHEBI:49883"/>
        <note>4Fe-4S-S-AdoMet</note>
    </ligand>
</feature>
<feature type="binding site" evidence="1">
    <location>
        <position position="426"/>
    </location>
    <ligand>
        <name>[4Fe-4S] cluster</name>
        <dbReference type="ChEBI" id="CHEBI:49883"/>
        <note>4Fe-4S-S-AdoMet</note>
    </ligand>
</feature>
<feature type="binding site" evidence="1">
    <location>
        <position position="431"/>
    </location>
    <ligand>
        <name>[4Fe-4S] cluster</name>
        <dbReference type="ChEBI" id="CHEBI:49883"/>
        <note>4Fe-4S-S-AdoMet</note>
    </ligand>
</feature>
<dbReference type="EC" id="4.1.99.17" evidence="1"/>
<dbReference type="EMBL" id="CP000097">
    <property type="protein sequence ID" value="ABB25142.1"/>
    <property type="molecule type" value="Genomic_DNA"/>
</dbReference>
<dbReference type="RefSeq" id="WP_011359006.1">
    <property type="nucleotide sequence ID" value="NC_007513.1"/>
</dbReference>
<dbReference type="SMR" id="Q3B0I6"/>
<dbReference type="STRING" id="316279.Syncc9902_0167"/>
<dbReference type="KEGG" id="sye:Syncc9902_0167"/>
<dbReference type="eggNOG" id="COG0422">
    <property type="taxonomic scope" value="Bacteria"/>
</dbReference>
<dbReference type="HOGENOM" id="CLU_013181_2_1_3"/>
<dbReference type="OrthoDB" id="9805897at2"/>
<dbReference type="UniPathway" id="UPA00060"/>
<dbReference type="Proteomes" id="UP000002712">
    <property type="component" value="Chromosome"/>
</dbReference>
<dbReference type="GO" id="GO:0005829">
    <property type="term" value="C:cytosol"/>
    <property type="evidence" value="ECO:0007669"/>
    <property type="project" value="TreeGrafter"/>
</dbReference>
<dbReference type="GO" id="GO:0051539">
    <property type="term" value="F:4 iron, 4 sulfur cluster binding"/>
    <property type="evidence" value="ECO:0007669"/>
    <property type="project" value="UniProtKB-KW"/>
</dbReference>
<dbReference type="GO" id="GO:0016830">
    <property type="term" value="F:carbon-carbon lyase activity"/>
    <property type="evidence" value="ECO:0007669"/>
    <property type="project" value="InterPro"/>
</dbReference>
<dbReference type="GO" id="GO:0008270">
    <property type="term" value="F:zinc ion binding"/>
    <property type="evidence" value="ECO:0007669"/>
    <property type="project" value="UniProtKB-UniRule"/>
</dbReference>
<dbReference type="GO" id="GO:0009228">
    <property type="term" value="P:thiamine biosynthetic process"/>
    <property type="evidence" value="ECO:0007669"/>
    <property type="project" value="UniProtKB-KW"/>
</dbReference>
<dbReference type="GO" id="GO:0009229">
    <property type="term" value="P:thiamine diphosphate biosynthetic process"/>
    <property type="evidence" value="ECO:0007669"/>
    <property type="project" value="UniProtKB-UniRule"/>
</dbReference>
<dbReference type="FunFam" id="3.20.20.540:FF:000001">
    <property type="entry name" value="Phosphomethylpyrimidine synthase"/>
    <property type="match status" value="1"/>
</dbReference>
<dbReference type="Gene3D" id="6.10.250.620">
    <property type="match status" value="1"/>
</dbReference>
<dbReference type="Gene3D" id="3.20.20.540">
    <property type="entry name" value="Radical SAM ThiC family, central domain"/>
    <property type="match status" value="1"/>
</dbReference>
<dbReference type="HAMAP" id="MF_00089">
    <property type="entry name" value="ThiC"/>
    <property type="match status" value="1"/>
</dbReference>
<dbReference type="InterPro" id="IPR037509">
    <property type="entry name" value="ThiC"/>
</dbReference>
<dbReference type="InterPro" id="IPR038521">
    <property type="entry name" value="ThiC/Bza_core_dom"/>
</dbReference>
<dbReference type="InterPro" id="IPR002817">
    <property type="entry name" value="ThiC/BzaA/B"/>
</dbReference>
<dbReference type="NCBIfam" id="NF006763">
    <property type="entry name" value="PRK09284.1"/>
    <property type="match status" value="1"/>
</dbReference>
<dbReference type="NCBIfam" id="NF009895">
    <property type="entry name" value="PRK13352.1"/>
    <property type="match status" value="1"/>
</dbReference>
<dbReference type="NCBIfam" id="TIGR00190">
    <property type="entry name" value="thiC"/>
    <property type="match status" value="1"/>
</dbReference>
<dbReference type="PANTHER" id="PTHR30557:SF1">
    <property type="entry name" value="PHOSPHOMETHYLPYRIMIDINE SYNTHASE, CHLOROPLASTIC"/>
    <property type="match status" value="1"/>
</dbReference>
<dbReference type="PANTHER" id="PTHR30557">
    <property type="entry name" value="THIAMINE BIOSYNTHESIS PROTEIN THIC"/>
    <property type="match status" value="1"/>
</dbReference>
<dbReference type="Pfam" id="PF01964">
    <property type="entry name" value="ThiC_Rad_SAM"/>
    <property type="match status" value="1"/>
</dbReference>
<dbReference type="SFLD" id="SFLDF00407">
    <property type="entry name" value="phosphomethylpyrimidine_syntha"/>
    <property type="match status" value="1"/>
</dbReference>
<dbReference type="SFLD" id="SFLDG01114">
    <property type="entry name" value="phosphomethylpyrimidine_syntha"/>
    <property type="match status" value="1"/>
</dbReference>
<dbReference type="SFLD" id="SFLDS00113">
    <property type="entry name" value="Radical_SAM_Phosphomethylpyrim"/>
    <property type="match status" value="1"/>
</dbReference>
<proteinExistence type="inferred from homology"/>
<organism>
    <name type="scientific">Synechococcus sp. (strain CC9902)</name>
    <dbReference type="NCBI Taxonomy" id="316279"/>
    <lineage>
        <taxon>Bacteria</taxon>
        <taxon>Bacillati</taxon>
        <taxon>Cyanobacteriota</taxon>
        <taxon>Cyanophyceae</taxon>
        <taxon>Synechococcales</taxon>
        <taxon>Synechococcaceae</taxon>
        <taxon>Synechococcus</taxon>
    </lineage>
</organism>
<keyword id="KW-0004">4Fe-4S</keyword>
<keyword id="KW-0408">Iron</keyword>
<keyword id="KW-0411">Iron-sulfur</keyword>
<keyword id="KW-0456">Lyase</keyword>
<keyword id="KW-0479">Metal-binding</keyword>
<keyword id="KW-1185">Reference proteome</keyword>
<keyword id="KW-0949">S-adenosyl-L-methionine</keyword>
<keyword id="KW-0784">Thiamine biosynthesis</keyword>
<keyword id="KW-0862">Zinc</keyword>
<gene>
    <name evidence="1" type="primary">thiC</name>
    <name type="ordered locus">Syncc9902_0167</name>
</gene>
<comment type="function">
    <text evidence="1">Catalyzes the synthesis of the hydroxymethylpyrimidine phosphate (HMP-P) moiety of thiamine from aminoimidazole ribotide (AIR) in a radical S-adenosyl-L-methionine (SAM)-dependent reaction.</text>
</comment>
<comment type="catalytic activity">
    <reaction evidence="1">
        <text>5-amino-1-(5-phospho-beta-D-ribosyl)imidazole + S-adenosyl-L-methionine = 4-amino-2-methyl-5-(phosphooxymethyl)pyrimidine + CO + 5'-deoxyadenosine + formate + L-methionine + 3 H(+)</text>
        <dbReference type="Rhea" id="RHEA:24840"/>
        <dbReference type="ChEBI" id="CHEBI:15378"/>
        <dbReference type="ChEBI" id="CHEBI:15740"/>
        <dbReference type="ChEBI" id="CHEBI:17245"/>
        <dbReference type="ChEBI" id="CHEBI:17319"/>
        <dbReference type="ChEBI" id="CHEBI:57844"/>
        <dbReference type="ChEBI" id="CHEBI:58354"/>
        <dbReference type="ChEBI" id="CHEBI:59789"/>
        <dbReference type="ChEBI" id="CHEBI:137981"/>
        <dbReference type="EC" id="4.1.99.17"/>
    </reaction>
</comment>
<comment type="cofactor">
    <cofactor evidence="1">
        <name>[4Fe-4S] cluster</name>
        <dbReference type="ChEBI" id="CHEBI:49883"/>
    </cofactor>
    <text evidence="1">Binds 1 [4Fe-4S] cluster per subunit. The cluster is coordinated with 3 cysteines and an exchangeable S-adenosyl-L-methionine.</text>
</comment>
<comment type="pathway">
    <text evidence="1">Cofactor biosynthesis; thiamine diphosphate biosynthesis.</text>
</comment>
<comment type="similarity">
    <text evidence="1">Belongs to the ThiC family.</text>
</comment>
<evidence type="ECO:0000255" key="1">
    <source>
        <dbReference type="HAMAP-Rule" id="MF_00089"/>
    </source>
</evidence>
<protein>
    <recommendedName>
        <fullName evidence="1">Phosphomethylpyrimidine synthase</fullName>
        <ecNumber evidence="1">4.1.99.17</ecNumber>
    </recommendedName>
    <alternativeName>
        <fullName evidence="1">Hydroxymethylpyrimidine phosphate synthase</fullName>
        <shortName evidence="1">HMP-P synthase</shortName>
        <shortName evidence="1">HMP-phosphate synthase</shortName>
        <shortName evidence="1">HMPP synthase</shortName>
    </alternativeName>
    <alternativeName>
        <fullName evidence="1">Thiamine biosynthesis protein ThiC</fullName>
    </alternativeName>
</protein>
<name>THIC_SYNS9</name>
<sequence>MRTQWVSARKGQANVSQMHYARKGVVTEEMAYVAKRENLPESLIMEEVARGRMIIPANINHTNLEPMAIGIASSCKVNANIGASPNASDAAEEVNKLKLAVKYGADTVMDLSTGGVNLDEVRTAIIGASPVPIGTVPVYQALESVHGSIEKLDEDDFLHIIEKHCQQGVDYQTIHAGLLIEHLPKVKGRITGIVSRGGGILAQWMLYHHRQNPLFTRFDDICEIFKRYDCTFSLGDSLRPGCQHDASDAAQLAELKTLGELTRRAWKHDVQVMVEGPGHVPLDQIEFNVKKQMEECNEAPFYVLGPLVTDIAPGYDHITSAIGAAMAGWHGTAMLCYVTPKEHLGLPNAEDVREGLIAYKIAAHAADIARHRPGARDRDDELSRARYAFDWNKQFELSLDPERAKEYHDETLPADIYKQAEFCSMCGPKHCPMQTKITDEDLEGLQKVLESQGAAELASVKLDKAE</sequence>
<accession>Q3B0I6</accession>